<gene>
    <name evidence="1" type="primary">uppP</name>
    <name type="ordered locus">EcHS_A3235</name>
</gene>
<keyword id="KW-0046">Antibiotic resistance</keyword>
<keyword id="KW-0997">Cell inner membrane</keyword>
<keyword id="KW-1003">Cell membrane</keyword>
<keyword id="KW-0133">Cell shape</keyword>
<keyword id="KW-0961">Cell wall biogenesis/degradation</keyword>
<keyword id="KW-0378">Hydrolase</keyword>
<keyword id="KW-0472">Membrane</keyword>
<keyword id="KW-0573">Peptidoglycan synthesis</keyword>
<keyword id="KW-0812">Transmembrane</keyword>
<keyword id="KW-1133">Transmembrane helix</keyword>
<reference key="1">
    <citation type="journal article" date="2008" name="J. Bacteriol.">
        <title>The pangenome structure of Escherichia coli: comparative genomic analysis of E. coli commensal and pathogenic isolates.</title>
        <authorList>
            <person name="Rasko D.A."/>
            <person name="Rosovitz M.J."/>
            <person name="Myers G.S.A."/>
            <person name="Mongodin E.F."/>
            <person name="Fricke W.F."/>
            <person name="Gajer P."/>
            <person name="Crabtree J."/>
            <person name="Sebaihia M."/>
            <person name="Thomson N.R."/>
            <person name="Chaudhuri R."/>
            <person name="Henderson I.R."/>
            <person name="Sperandio V."/>
            <person name="Ravel J."/>
        </authorList>
    </citation>
    <scope>NUCLEOTIDE SEQUENCE [LARGE SCALE GENOMIC DNA]</scope>
    <source>
        <strain>HS</strain>
    </source>
</reference>
<proteinExistence type="inferred from homology"/>
<feature type="chain" id="PRO_1000062797" description="Undecaprenyl-diphosphatase">
    <location>
        <begin position="1"/>
        <end position="273"/>
    </location>
</feature>
<feature type="transmembrane region" description="Helical" evidence="1">
    <location>
        <begin position="6"/>
        <end position="26"/>
    </location>
</feature>
<feature type="transmembrane region" description="Helical" evidence="1">
    <location>
        <begin position="45"/>
        <end position="65"/>
    </location>
</feature>
<feature type="transmembrane region" description="Helical" evidence="1">
    <location>
        <begin position="90"/>
        <end position="110"/>
    </location>
</feature>
<feature type="transmembrane region" description="Helical" evidence="1">
    <location>
        <begin position="116"/>
        <end position="136"/>
    </location>
</feature>
<feature type="transmembrane region" description="Helical" evidence="1">
    <location>
        <begin position="190"/>
        <end position="210"/>
    </location>
</feature>
<feature type="transmembrane region" description="Helical" evidence="1">
    <location>
        <begin position="222"/>
        <end position="242"/>
    </location>
</feature>
<feature type="transmembrane region" description="Helical" evidence="1">
    <location>
        <begin position="252"/>
        <end position="272"/>
    </location>
</feature>
<name>UPPP_ECOHS</name>
<protein>
    <recommendedName>
        <fullName evidence="1">Undecaprenyl-diphosphatase</fullName>
        <ecNumber evidence="1">3.6.1.27</ecNumber>
    </recommendedName>
    <alternativeName>
        <fullName evidence="1">Bacitracin resistance protein</fullName>
    </alternativeName>
    <alternativeName>
        <fullName evidence="1">Undecaprenyl pyrophosphate phosphatase</fullName>
    </alternativeName>
</protein>
<organism>
    <name type="scientific">Escherichia coli O9:H4 (strain HS)</name>
    <dbReference type="NCBI Taxonomy" id="331112"/>
    <lineage>
        <taxon>Bacteria</taxon>
        <taxon>Pseudomonadati</taxon>
        <taxon>Pseudomonadota</taxon>
        <taxon>Gammaproteobacteria</taxon>
        <taxon>Enterobacterales</taxon>
        <taxon>Enterobacteriaceae</taxon>
        <taxon>Escherichia</taxon>
    </lineage>
</organism>
<comment type="function">
    <text evidence="1">Catalyzes the dephosphorylation of undecaprenyl diphosphate (UPP). Confers resistance to bacitracin.</text>
</comment>
<comment type="catalytic activity">
    <reaction evidence="1">
        <text>di-trans,octa-cis-undecaprenyl diphosphate + H2O = di-trans,octa-cis-undecaprenyl phosphate + phosphate + H(+)</text>
        <dbReference type="Rhea" id="RHEA:28094"/>
        <dbReference type="ChEBI" id="CHEBI:15377"/>
        <dbReference type="ChEBI" id="CHEBI:15378"/>
        <dbReference type="ChEBI" id="CHEBI:43474"/>
        <dbReference type="ChEBI" id="CHEBI:58405"/>
        <dbReference type="ChEBI" id="CHEBI:60392"/>
        <dbReference type="EC" id="3.6.1.27"/>
    </reaction>
</comment>
<comment type="subcellular location">
    <subcellularLocation>
        <location evidence="1">Cell inner membrane</location>
        <topology evidence="1">Multi-pass membrane protein</topology>
    </subcellularLocation>
</comment>
<comment type="miscellaneous">
    <text>Bacitracin is thought to be involved in the inhibition of peptidoglycan synthesis by sequestering undecaprenyl diphosphate, thereby reducing the pool of lipid carrier available.</text>
</comment>
<comment type="similarity">
    <text evidence="1">Belongs to the UppP family.</text>
</comment>
<evidence type="ECO:0000255" key="1">
    <source>
        <dbReference type="HAMAP-Rule" id="MF_01006"/>
    </source>
</evidence>
<dbReference type="EC" id="3.6.1.27" evidence="1"/>
<dbReference type="EMBL" id="CP000802">
    <property type="protein sequence ID" value="ABV07466.1"/>
    <property type="molecule type" value="Genomic_DNA"/>
</dbReference>
<dbReference type="SMR" id="A8A4L2"/>
<dbReference type="KEGG" id="ecx:EcHS_A3235"/>
<dbReference type="HOGENOM" id="CLU_060296_2_0_6"/>
<dbReference type="GO" id="GO:0005886">
    <property type="term" value="C:plasma membrane"/>
    <property type="evidence" value="ECO:0007669"/>
    <property type="project" value="UniProtKB-SubCell"/>
</dbReference>
<dbReference type="GO" id="GO:0050380">
    <property type="term" value="F:undecaprenyl-diphosphatase activity"/>
    <property type="evidence" value="ECO:0007669"/>
    <property type="project" value="UniProtKB-UniRule"/>
</dbReference>
<dbReference type="GO" id="GO:0071555">
    <property type="term" value="P:cell wall organization"/>
    <property type="evidence" value="ECO:0007669"/>
    <property type="project" value="UniProtKB-KW"/>
</dbReference>
<dbReference type="GO" id="GO:0009252">
    <property type="term" value="P:peptidoglycan biosynthetic process"/>
    <property type="evidence" value="ECO:0007669"/>
    <property type="project" value="UniProtKB-KW"/>
</dbReference>
<dbReference type="GO" id="GO:0008360">
    <property type="term" value="P:regulation of cell shape"/>
    <property type="evidence" value="ECO:0007669"/>
    <property type="project" value="UniProtKB-KW"/>
</dbReference>
<dbReference type="GO" id="GO:0046677">
    <property type="term" value="P:response to antibiotic"/>
    <property type="evidence" value="ECO:0007669"/>
    <property type="project" value="UniProtKB-UniRule"/>
</dbReference>
<dbReference type="HAMAP" id="MF_01006">
    <property type="entry name" value="Undec_diphosphatase"/>
    <property type="match status" value="1"/>
</dbReference>
<dbReference type="InterPro" id="IPR003824">
    <property type="entry name" value="UppP"/>
</dbReference>
<dbReference type="NCBIfam" id="NF001388">
    <property type="entry name" value="PRK00281.1-1"/>
    <property type="match status" value="1"/>
</dbReference>
<dbReference type="NCBIfam" id="NF001389">
    <property type="entry name" value="PRK00281.1-2"/>
    <property type="match status" value="1"/>
</dbReference>
<dbReference type="NCBIfam" id="NF001390">
    <property type="entry name" value="PRK00281.1-4"/>
    <property type="match status" value="1"/>
</dbReference>
<dbReference type="NCBIfam" id="TIGR00753">
    <property type="entry name" value="undec_PP_bacA"/>
    <property type="match status" value="1"/>
</dbReference>
<dbReference type="PANTHER" id="PTHR30622">
    <property type="entry name" value="UNDECAPRENYL-DIPHOSPHATASE"/>
    <property type="match status" value="1"/>
</dbReference>
<dbReference type="PANTHER" id="PTHR30622:SF3">
    <property type="entry name" value="UNDECAPRENYL-DIPHOSPHATASE"/>
    <property type="match status" value="1"/>
</dbReference>
<dbReference type="Pfam" id="PF02673">
    <property type="entry name" value="BacA"/>
    <property type="match status" value="1"/>
</dbReference>
<sequence>MSDMHSLLIAAILGVVEGLTEFLPVSSTGHMIIVGHLLGFEGDTAKTFEVVIQLGSILAVVVMFWRRLFGLIGIHFGRPLQHEGESKGRLTLIHILLGMIPAVVLGLLFHDTIKSLFNPINVMYALVVGGLLLIAAECLKPKEPRAPGLDDMTYRQAFMIGCFQCLALWPGFSRSGATISGGMLMGVSRYAASEFSFLLAVPMMMGATALDLYKSWGFLTSGDIPMFAVGFITAFVVALIAIKTFLQLIKRISFIPFAIYRFIVAAAVYVVFF</sequence>
<accession>A8A4L2</accession>